<evidence type="ECO:0000250" key="1"/>
<evidence type="ECO:0000250" key="2">
    <source>
        <dbReference type="UniProtKB" id="P0A998"/>
    </source>
</evidence>
<evidence type="ECO:0000250" key="3">
    <source>
        <dbReference type="UniProtKB" id="Q9HWF9"/>
    </source>
</evidence>
<evidence type="ECO:0000255" key="4">
    <source>
        <dbReference type="PROSITE-ProRule" id="PRU00085"/>
    </source>
</evidence>
<evidence type="ECO:0000269" key="5">
    <source>
    </source>
</evidence>
<evidence type="ECO:0000303" key="6">
    <source>
    </source>
</evidence>
<evidence type="ECO:0000305" key="7"/>
<evidence type="ECO:0000305" key="8">
    <source>
    </source>
</evidence>
<gene>
    <name evidence="6" type="primary">bfrA</name>
</gene>
<dbReference type="EC" id="1.16.3.1" evidence="3"/>
<dbReference type="EMBL" id="U76633">
    <property type="protein sequence ID" value="AAB18968.1"/>
    <property type="molecule type" value="Genomic_DNA"/>
</dbReference>
<dbReference type="SMR" id="P0A0R2"/>
<dbReference type="OMA" id="LYERIDH"/>
<dbReference type="GO" id="GO:0005829">
    <property type="term" value="C:cytosol"/>
    <property type="evidence" value="ECO:0007669"/>
    <property type="project" value="TreeGrafter"/>
</dbReference>
<dbReference type="GO" id="GO:0008199">
    <property type="term" value="F:ferric iron binding"/>
    <property type="evidence" value="ECO:0007669"/>
    <property type="project" value="InterPro"/>
</dbReference>
<dbReference type="GO" id="GO:0004322">
    <property type="term" value="F:ferroxidase activity"/>
    <property type="evidence" value="ECO:0007669"/>
    <property type="project" value="UniProtKB-EC"/>
</dbReference>
<dbReference type="GO" id="GO:0020037">
    <property type="term" value="F:heme binding"/>
    <property type="evidence" value="ECO:0007669"/>
    <property type="project" value="TreeGrafter"/>
</dbReference>
<dbReference type="GO" id="GO:0006879">
    <property type="term" value="P:intracellular iron ion homeostasis"/>
    <property type="evidence" value="ECO:0007669"/>
    <property type="project" value="UniProtKB-KW"/>
</dbReference>
<dbReference type="GO" id="GO:0006826">
    <property type="term" value="P:iron ion transport"/>
    <property type="evidence" value="ECO:0007669"/>
    <property type="project" value="UniProtKB-KW"/>
</dbReference>
<dbReference type="CDD" id="cd00907">
    <property type="entry name" value="Bacterioferritin"/>
    <property type="match status" value="1"/>
</dbReference>
<dbReference type="FunFam" id="1.20.1260.10:FF:000005">
    <property type="entry name" value="Bacterioferritin"/>
    <property type="match status" value="1"/>
</dbReference>
<dbReference type="Gene3D" id="1.20.1260.10">
    <property type="match status" value="1"/>
</dbReference>
<dbReference type="InterPro" id="IPR002024">
    <property type="entry name" value="Bacterioferritin"/>
</dbReference>
<dbReference type="InterPro" id="IPR012347">
    <property type="entry name" value="Ferritin-like"/>
</dbReference>
<dbReference type="InterPro" id="IPR009040">
    <property type="entry name" value="Ferritin-like_diiron"/>
</dbReference>
<dbReference type="InterPro" id="IPR009078">
    <property type="entry name" value="Ferritin-like_SF"/>
</dbReference>
<dbReference type="InterPro" id="IPR008331">
    <property type="entry name" value="Ferritin_DPS_dom"/>
</dbReference>
<dbReference type="NCBIfam" id="TIGR00754">
    <property type="entry name" value="bfr"/>
    <property type="match status" value="1"/>
</dbReference>
<dbReference type="PANTHER" id="PTHR30295">
    <property type="entry name" value="BACTERIOFERRITIN"/>
    <property type="match status" value="1"/>
</dbReference>
<dbReference type="PANTHER" id="PTHR30295:SF9">
    <property type="entry name" value="BACTERIOFERRITIN"/>
    <property type="match status" value="1"/>
</dbReference>
<dbReference type="Pfam" id="PF00210">
    <property type="entry name" value="Ferritin"/>
    <property type="match status" value="1"/>
</dbReference>
<dbReference type="PIRSF" id="PIRSF002560">
    <property type="entry name" value="Bacterioferritin"/>
    <property type="match status" value="1"/>
</dbReference>
<dbReference type="PRINTS" id="PR00601">
    <property type="entry name" value="BACFERRITIN"/>
</dbReference>
<dbReference type="SUPFAM" id="SSF47240">
    <property type="entry name" value="Ferritin-like"/>
    <property type="match status" value="1"/>
</dbReference>
<dbReference type="PROSITE" id="PS00549">
    <property type="entry name" value="BACTERIOFERRITIN"/>
    <property type="match status" value="1"/>
</dbReference>
<dbReference type="PROSITE" id="PS50905">
    <property type="entry name" value="FERRITIN_LIKE"/>
    <property type="match status" value="1"/>
</dbReference>
<reference key="1">
    <citation type="journal article" date="1999" name="Microbiology">
        <title>Neisseria gonorrhoeae bacterioferritin: structural heterogeneity, involvement in iron storage and protection against oxidative stress.</title>
        <authorList>
            <person name="Chen C.Y."/>
            <person name="Morse S.A."/>
        </authorList>
    </citation>
    <scope>NUCLEOTIDE SEQUENCE [GENOMIC DNA]</scope>
    <scope>PROTEIN SEQUENCE OF 1-10</scope>
    <scope>FUNCTION</scope>
    <scope>SUBUNIT</scope>
    <scope>SUBCELLULAR LOCATION</scope>
    <source>
        <strain>ATCC 33084 / F62 / M-1914</strain>
    </source>
</reference>
<organism>
    <name type="scientific">Neisseria gonorrhoeae</name>
    <dbReference type="NCBI Taxonomy" id="485"/>
    <lineage>
        <taxon>Bacteria</taxon>
        <taxon>Pseudomonadati</taxon>
        <taxon>Pseudomonadota</taxon>
        <taxon>Betaproteobacteria</taxon>
        <taxon>Neisseriales</taxon>
        <taxon>Neisseriaceae</taxon>
        <taxon>Neisseria</taxon>
    </lineage>
</organism>
<keyword id="KW-0963">Cytoplasm</keyword>
<keyword id="KW-0903">Direct protein sequencing</keyword>
<keyword id="KW-0406">Ion transport</keyword>
<keyword id="KW-0408">Iron</keyword>
<keyword id="KW-0409">Iron storage</keyword>
<keyword id="KW-0410">Iron transport</keyword>
<keyword id="KW-0479">Metal-binding</keyword>
<keyword id="KW-0560">Oxidoreductase</keyword>
<keyword id="KW-0813">Transport</keyword>
<accession>P0A0R2</accession>
<accession>P72080</accession>
<sequence length="154" mass="17961">MQGNQAVVDYMNELLSGELAARDQYFIHSRLYSEWGYTKLFERLNHEMEEETTHAEDFIRRILMLGGTPKMARAELNIGTDVVSCLKADLQTEYEVRDALKKGIKLCEEAQDYVTRDLMVAQLKDTEEDHAHWLEQQLRLIELIGEGNYYQSQL</sequence>
<name>FTNA_NEIGO</name>
<proteinExistence type="evidence at protein level"/>
<comment type="function">
    <text evidence="1 5">Iron-storage protein (PubMed:10537219). Its ferroxidase center binds Fe(2+), oxidizes it using dioxygen to Fe(3+), and participates in the subsequent Fe(3+) oxide mineral core formation within the central cavity of the BFR protein shell (By similarity). Plays a role in protection against iron-mediated oxidative stress (PubMed:10537219).</text>
</comment>
<comment type="catalytic activity">
    <reaction evidence="3">
        <text>4 Fe(2+) + O2 + 4 H(+) = 4 Fe(3+) + 2 H2O</text>
        <dbReference type="Rhea" id="RHEA:11148"/>
        <dbReference type="ChEBI" id="CHEBI:15377"/>
        <dbReference type="ChEBI" id="CHEBI:15378"/>
        <dbReference type="ChEBI" id="CHEBI:15379"/>
        <dbReference type="ChEBI" id="CHEBI:29033"/>
        <dbReference type="ChEBI" id="CHEBI:29034"/>
        <dbReference type="EC" id="1.16.3.1"/>
    </reaction>
</comment>
<comment type="catalytic activity">
    <reaction evidence="3">
        <text>Fe(2+)(in) = Fe(2+)(out)</text>
        <dbReference type="Rhea" id="RHEA:28486"/>
        <dbReference type="ChEBI" id="CHEBI:29033"/>
    </reaction>
</comment>
<comment type="subunit">
    <text evidence="3 5">Forms a bacterioferritin (BFR) complex with BfrB (PubMed:10537219). Heterooligomer of 24 subunits, arranged as 12 dimers, that are packed together to form an approximately spherical molecule with a central cavity, in which large amounts of iron can be deposited (By similarity).</text>
</comment>
<comment type="subcellular location">
    <subcellularLocation>
        <location evidence="5">Cytoplasm</location>
    </subcellularLocation>
</comment>
<comment type="similarity">
    <text evidence="7">Belongs to the bacterioferritin family.</text>
</comment>
<comment type="caution">
    <text evidence="8">This protein does not have the conserved Met residue required for heme-binding, instead it has Thr-52. The heme-binding subunit is probably BfrB (Probable) (PubMed:10537219).</text>
</comment>
<protein>
    <recommendedName>
        <fullName evidence="3">Bacterial ferritin</fullName>
        <ecNumber evidence="3">1.16.3.1</ecNumber>
    </recommendedName>
    <alternativeName>
        <fullName evidence="2">Bacterial non-heme ferritin</fullName>
    </alternativeName>
    <alternativeName>
        <fullName evidence="6">Bacterioferritin subunit BfrA</fullName>
        <shortName>BFR A</shortName>
    </alternativeName>
</protein>
<feature type="chain" id="PRO_0000192605" description="Bacterial ferritin">
    <location>
        <begin position="1"/>
        <end position="154"/>
    </location>
</feature>
<feature type="domain" description="Ferritin-like diiron" evidence="4">
    <location>
        <begin position="1"/>
        <end position="145"/>
    </location>
</feature>
<feature type="binding site" evidence="4">
    <location>
        <position position="18"/>
    </location>
    <ligand>
        <name>Fe cation</name>
        <dbReference type="ChEBI" id="CHEBI:24875"/>
        <label>1</label>
    </ligand>
</feature>
<feature type="binding site" evidence="4">
    <location>
        <position position="51"/>
    </location>
    <ligand>
        <name>Fe cation</name>
        <dbReference type="ChEBI" id="CHEBI:24875"/>
        <label>1</label>
    </ligand>
</feature>
<feature type="binding site" evidence="4">
    <location>
        <position position="51"/>
    </location>
    <ligand>
        <name>Fe cation</name>
        <dbReference type="ChEBI" id="CHEBI:24875"/>
        <label>2</label>
    </ligand>
</feature>
<feature type="binding site" evidence="4">
    <location>
        <position position="54"/>
    </location>
    <ligand>
        <name>Fe cation</name>
        <dbReference type="ChEBI" id="CHEBI:24875"/>
        <label>1</label>
    </ligand>
</feature>
<feature type="binding site" evidence="4">
    <location>
        <position position="93"/>
    </location>
    <ligand>
        <name>Fe cation</name>
        <dbReference type="ChEBI" id="CHEBI:24875"/>
        <label>2</label>
    </ligand>
</feature>
<feature type="binding site" evidence="4">
    <location>
        <position position="127"/>
    </location>
    <ligand>
        <name>Fe cation</name>
        <dbReference type="ChEBI" id="CHEBI:24875"/>
        <label>1</label>
    </ligand>
</feature>
<feature type="binding site" evidence="4">
    <location>
        <position position="127"/>
    </location>
    <ligand>
        <name>Fe cation</name>
        <dbReference type="ChEBI" id="CHEBI:24875"/>
        <label>2</label>
    </ligand>
</feature>
<feature type="binding site" evidence="4">
    <location>
        <position position="130"/>
    </location>
    <ligand>
        <name>Fe cation</name>
        <dbReference type="ChEBI" id="CHEBI:24875"/>
        <label>2</label>
    </ligand>
</feature>